<feature type="initiator methionine" description="Removed" evidence="1">
    <location>
        <position position="1"/>
    </location>
</feature>
<feature type="chain" id="PRO_0000163526" description="Large ribosomal subunit protein bL19">
    <location>
        <begin position="2"/>
        <end position="115"/>
    </location>
</feature>
<proteinExistence type="inferred from homology"/>
<sequence>MSNIIKQLEQEQMKQDVPSFRPGDTVEVKVWVVEGSKKRLQAFEGVVIAIRNRGLHSAFTVRKISNGEGVERVFQTHSPVVDSISVKRRGAVRKAKLYYLRERTGKAARIKERLN</sequence>
<keyword id="KW-1185">Reference proteome</keyword>
<keyword id="KW-0687">Ribonucleoprotein</keyword>
<keyword id="KW-0689">Ribosomal protein</keyword>
<accession>P0A7K9</accession>
<accession>P02420</accession>
<evidence type="ECO:0000250" key="1"/>
<evidence type="ECO:0000305" key="2"/>
<name>RL19_SHIFL</name>
<reference key="1">
    <citation type="journal article" date="2002" name="Nucleic Acids Res.">
        <title>Genome sequence of Shigella flexneri 2a: insights into pathogenicity through comparison with genomes of Escherichia coli K12 and O157.</title>
        <authorList>
            <person name="Jin Q."/>
            <person name="Yuan Z."/>
            <person name="Xu J."/>
            <person name="Wang Y."/>
            <person name="Shen Y."/>
            <person name="Lu W."/>
            <person name="Wang J."/>
            <person name="Liu H."/>
            <person name="Yang J."/>
            <person name="Yang F."/>
            <person name="Zhang X."/>
            <person name="Zhang J."/>
            <person name="Yang G."/>
            <person name="Wu H."/>
            <person name="Qu D."/>
            <person name="Dong J."/>
            <person name="Sun L."/>
            <person name="Xue Y."/>
            <person name="Zhao A."/>
            <person name="Gao Y."/>
            <person name="Zhu J."/>
            <person name="Kan B."/>
            <person name="Ding K."/>
            <person name="Chen S."/>
            <person name="Cheng H."/>
            <person name="Yao Z."/>
            <person name="He B."/>
            <person name="Chen R."/>
            <person name="Ma D."/>
            <person name="Qiang B."/>
            <person name="Wen Y."/>
            <person name="Hou Y."/>
            <person name="Yu J."/>
        </authorList>
    </citation>
    <scope>NUCLEOTIDE SEQUENCE [LARGE SCALE GENOMIC DNA]</scope>
    <source>
        <strain>301 / Serotype 2a</strain>
    </source>
</reference>
<reference key="2">
    <citation type="journal article" date="2003" name="Infect. Immun.">
        <title>Complete genome sequence and comparative genomics of Shigella flexneri serotype 2a strain 2457T.</title>
        <authorList>
            <person name="Wei J."/>
            <person name="Goldberg M.B."/>
            <person name="Burland V."/>
            <person name="Venkatesan M.M."/>
            <person name="Deng W."/>
            <person name="Fournier G."/>
            <person name="Mayhew G.F."/>
            <person name="Plunkett G. III"/>
            <person name="Rose D.J."/>
            <person name="Darling A."/>
            <person name="Mau B."/>
            <person name="Perna N.T."/>
            <person name="Payne S.M."/>
            <person name="Runyen-Janecky L.J."/>
            <person name="Zhou S."/>
            <person name="Schwartz D.C."/>
            <person name="Blattner F.R."/>
        </authorList>
    </citation>
    <scope>NUCLEOTIDE SEQUENCE [LARGE SCALE GENOMIC DNA]</scope>
    <source>
        <strain>ATCC 700930 / 2457T / Serotype 2a</strain>
    </source>
</reference>
<protein>
    <recommendedName>
        <fullName evidence="2">Large ribosomal subunit protein bL19</fullName>
    </recommendedName>
    <alternativeName>
        <fullName>50S ribosomal protein L19</fullName>
    </alternativeName>
</protein>
<comment type="function">
    <text evidence="1">This protein is located at the 30S-50S ribosomal subunit interface and may play a role in the structure and function of the aminoacyl-tRNA binding site.</text>
</comment>
<comment type="similarity">
    <text evidence="2">Belongs to the bacterial ribosomal protein bL19 family.</text>
</comment>
<dbReference type="EMBL" id="AE005674">
    <property type="protein sequence ID" value="AAN44161.1"/>
    <property type="molecule type" value="Genomic_DNA"/>
</dbReference>
<dbReference type="EMBL" id="AE014073">
    <property type="protein sequence ID" value="AAP17986.1"/>
    <property type="molecule type" value="Genomic_DNA"/>
</dbReference>
<dbReference type="RefSeq" id="NP_708454.1">
    <property type="nucleotide sequence ID" value="NC_004337.2"/>
</dbReference>
<dbReference type="RefSeq" id="WP_000065253.1">
    <property type="nucleotide sequence ID" value="NZ_WPGW01000074.1"/>
</dbReference>
<dbReference type="SMR" id="P0A7K9"/>
<dbReference type="STRING" id="198214.SF2666"/>
<dbReference type="PaxDb" id="198214-SF2666"/>
<dbReference type="GeneID" id="1025681"/>
<dbReference type="GeneID" id="93774456"/>
<dbReference type="KEGG" id="sfl:SF2666"/>
<dbReference type="KEGG" id="sfx:S2843"/>
<dbReference type="PATRIC" id="fig|198214.7.peg.3175"/>
<dbReference type="HOGENOM" id="CLU_103507_2_1_6"/>
<dbReference type="Proteomes" id="UP000001006">
    <property type="component" value="Chromosome"/>
</dbReference>
<dbReference type="Proteomes" id="UP000002673">
    <property type="component" value="Chromosome"/>
</dbReference>
<dbReference type="GO" id="GO:0022625">
    <property type="term" value="C:cytosolic large ribosomal subunit"/>
    <property type="evidence" value="ECO:0007669"/>
    <property type="project" value="TreeGrafter"/>
</dbReference>
<dbReference type="GO" id="GO:0003735">
    <property type="term" value="F:structural constituent of ribosome"/>
    <property type="evidence" value="ECO:0007669"/>
    <property type="project" value="InterPro"/>
</dbReference>
<dbReference type="GO" id="GO:0006412">
    <property type="term" value="P:translation"/>
    <property type="evidence" value="ECO:0007669"/>
    <property type="project" value="UniProtKB-UniRule"/>
</dbReference>
<dbReference type="FunFam" id="2.30.30.790:FF:000001">
    <property type="entry name" value="50S ribosomal protein L19"/>
    <property type="match status" value="1"/>
</dbReference>
<dbReference type="Gene3D" id="2.30.30.790">
    <property type="match status" value="1"/>
</dbReference>
<dbReference type="HAMAP" id="MF_00402">
    <property type="entry name" value="Ribosomal_bL19"/>
    <property type="match status" value="1"/>
</dbReference>
<dbReference type="InterPro" id="IPR001857">
    <property type="entry name" value="Ribosomal_bL19"/>
</dbReference>
<dbReference type="InterPro" id="IPR018257">
    <property type="entry name" value="Ribosomal_bL19_CS"/>
</dbReference>
<dbReference type="InterPro" id="IPR038657">
    <property type="entry name" value="Ribosomal_bL19_sf"/>
</dbReference>
<dbReference type="InterPro" id="IPR008991">
    <property type="entry name" value="Translation_prot_SH3-like_sf"/>
</dbReference>
<dbReference type="NCBIfam" id="TIGR01024">
    <property type="entry name" value="rplS_bact"/>
    <property type="match status" value="1"/>
</dbReference>
<dbReference type="PANTHER" id="PTHR15680:SF9">
    <property type="entry name" value="LARGE RIBOSOMAL SUBUNIT PROTEIN BL19M"/>
    <property type="match status" value="1"/>
</dbReference>
<dbReference type="PANTHER" id="PTHR15680">
    <property type="entry name" value="RIBOSOMAL PROTEIN L19"/>
    <property type="match status" value="1"/>
</dbReference>
<dbReference type="Pfam" id="PF01245">
    <property type="entry name" value="Ribosomal_L19"/>
    <property type="match status" value="1"/>
</dbReference>
<dbReference type="PIRSF" id="PIRSF002191">
    <property type="entry name" value="Ribosomal_L19"/>
    <property type="match status" value="1"/>
</dbReference>
<dbReference type="PRINTS" id="PR00061">
    <property type="entry name" value="RIBOSOMALL19"/>
</dbReference>
<dbReference type="SUPFAM" id="SSF50104">
    <property type="entry name" value="Translation proteins SH3-like domain"/>
    <property type="match status" value="1"/>
</dbReference>
<dbReference type="PROSITE" id="PS01015">
    <property type="entry name" value="RIBOSOMAL_L19"/>
    <property type="match status" value="1"/>
</dbReference>
<gene>
    <name type="primary">rplS</name>
    <name type="ordered locus">SF2666</name>
    <name type="ordered locus">S2843</name>
</gene>
<organism>
    <name type="scientific">Shigella flexneri</name>
    <dbReference type="NCBI Taxonomy" id="623"/>
    <lineage>
        <taxon>Bacteria</taxon>
        <taxon>Pseudomonadati</taxon>
        <taxon>Pseudomonadota</taxon>
        <taxon>Gammaproteobacteria</taxon>
        <taxon>Enterobacterales</taxon>
        <taxon>Enterobacteriaceae</taxon>
        <taxon>Shigella</taxon>
    </lineage>
</organism>